<dbReference type="EMBL" id="U02974">
    <property type="protein sequence ID" value="AAC59640.1"/>
    <property type="molecule type" value="mRNA"/>
</dbReference>
<dbReference type="PIR" id="I51324">
    <property type="entry name" value="I51324"/>
</dbReference>
<dbReference type="SMR" id="P36964"/>
<dbReference type="GO" id="GO:0044295">
    <property type="term" value="C:axonal growth cone"/>
    <property type="evidence" value="ECO:0007669"/>
    <property type="project" value="TreeGrafter"/>
</dbReference>
<dbReference type="GO" id="GO:0030175">
    <property type="term" value="C:filopodium"/>
    <property type="evidence" value="ECO:0007669"/>
    <property type="project" value="TreeGrafter"/>
</dbReference>
<dbReference type="GO" id="GO:0043025">
    <property type="term" value="C:neuronal cell body"/>
    <property type="evidence" value="ECO:0007669"/>
    <property type="project" value="TreeGrafter"/>
</dbReference>
<dbReference type="GO" id="GO:0005886">
    <property type="term" value="C:plasma membrane"/>
    <property type="evidence" value="ECO:0007669"/>
    <property type="project" value="TreeGrafter"/>
</dbReference>
<dbReference type="GO" id="GO:0031175">
    <property type="term" value="P:neuron projection development"/>
    <property type="evidence" value="ECO:0007669"/>
    <property type="project" value="TreeGrafter"/>
</dbReference>
<dbReference type="InterPro" id="IPR001614">
    <property type="entry name" value="Myelin_PLP"/>
</dbReference>
<dbReference type="InterPro" id="IPR018237">
    <property type="entry name" value="Myelin_PLP_CS"/>
</dbReference>
<dbReference type="PANTHER" id="PTHR11683">
    <property type="entry name" value="MYELIN PROTEOLIPID"/>
    <property type="match status" value="1"/>
</dbReference>
<dbReference type="PANTHER" id="PTHR11683:SF4">
    <property type="entry name" value="NEURONAL MEMBRANE GLYCOPROTEIN M6-A"/>
    <property type="match status" value="1"/>
</dbReference>
<dbReference type="Pfam" id="PF01275">
    <property type="entry name" value="Myelin_PLP"/>
    <property type="match status" value="1"/>
</dbReference>
<dbReference type="PRINTS" id="PR00214">
    <property type="entry name" value="MYELINPLP"/>
</dbReference>
<dbReference type="SMART" id="SM00002">
    <property type="entry name" value="PLP"/>
    <property type="match status" value="1"/>
</dbReference>
<dbReference type="PROSITE" id="PS00575">
    <property type="entry name" value="MYELIN_PLP_1"/>
    <property type="match status" value="1"/>
</dbReference>
<dbReference type="PROSITE" id="PS01004">
    <property type="entry name" value="MYELIN_PLP_2"/>
    <property type="match status" value="1"/>
</dbReference>
<name>DMB_SQUAC</name>
<reference key="1">
    <citation type="journal article" date="1993" name="Neuron">
        <title>A proteolipid protein gene family: expression in sharks and rays and possible evolution from an ancestral gene encoding a pore-forming polypeptide.</title>
        <authorList>
            <person name="Kitagawa K."/>
            <person name="Sinoway M.P."/>
            <person name="Yang C."/>
            <person name="Gould R.M."/>
            <person name="Colman D.R."/>
        </authorList>
    </citation>
    <scope>NUCLEOTIDE SEQUENCE [MRNA]</scope>
    <source>
        <tissue>Brain</tissue>
    </source>
</reference>
<sequence>MEENMEEGQTQKGCFECCIKCLGGIPYASLIATILLYAGVALFCGCGHEALSGTVTILQNNFEVVRGAGDTIDVFTMIDIFKYVIYGVAAAFFVYGILLMVEGFFTTGAIKDLYGDFKITTCGRCVSGWFIMLTYIFMLAWLGVTAFTSLPVFMYFNIWTLCQNVTIMESTDLCFDLRQFGIVPIHEQKTVCTLNENFSKLCQSNDLNMTFHLFIVALAGAGAAVIAMVHYLMVLSANWAYVKDACRMQKYEDIKSKEEQELHDIHSTRSKERLNAYT</sequence>
<accession>P36964</accession>
<organism>
    <name type="scientific">Squalus acanthias</name>
    <name type="common">Spiny dogfish</name>
    <dbReference type="NCBI Taxonomy" id="7797"/>
    <lineage>
        <taxon>Eukaryota</taxon>
        <taxon>Metazoa</taxon>
        <taxon>Chordata</taxon>
        <taxon>Craniata</taxon>
        <taxon>Vertebrata</taxon>
        <taxon>Chondrichthyes</taxon>
        <taxon>Elasmobranchii</taxon>
        <taxon>Squalomorphii</taxon>
        <taxon>Squaliformes</taxon>
        <taxon>Squalidae</taxon>
        <taxon>Squalus</taxon>
    </lineage>
</organism>
<comment type="subcellular location">
    <subcellularLocation>
        <location evidence="2">Membrane</location>
        <topology evidence="2">Multi-pass membrane protein</topology>
    </subcellularLocation>
</comment>
<comment type="similarity">
    <text evidence="2">Belongs to the myelin proteolipid protein family.</text>
</comment>
<feature type="chain" id="PRO_0000159016" description="Proteolipid protein DM beta">
    <location>
        <begin position="1"/>
        <end position="278"/>
    </location>
</feature>
<feature type="transmembrane region" description="Helical" evidence="1">
    <location>
        <begin position="30"/>
        <end position="46"/>
    </location>
</feature>
<feature type="transmembrane region" description="Helical" evidence="1">
    <location>
        <begin position="84"/>
        <end position="100"/>
    </location>
</feature>
<feature type="transmembrane region" description="Helical" evidence="1">
    <location>
        <begin position="130"/>
        <end position="146"/>
    </location>
</feature>
<feature type="transmembrane region" description="Helical" evidence="1">
    <location>
        <begin position="213"/>
        <end position="229"/>
    </location>
</feature>
<protein>
    <recommendedName>
        <fullName>Proteolipid protein DM beta</fullName>
    </recommendedName>
</protein>
<keyword id="KW-0472">Membrane</keyword>
<keyword id="KW-0812">Transmembrane</keyword>
<keyword id="KW-1133">Transmembrane helix</keyword>
<proteinExistence type="evidence at transcript level"/>
<evidence type="ECO:0000255" key="1"/>
<evidence type="ECO:0000305" key="2"/>